<feature type="chain" id="PRO_0000237909" description="Shikimate kinase">
    <location>
        <begin position="1"/>
        <end position="192"/>
    </location>
</feature>
<feature type="binding site" evidence="1">
    <location>
        <begin position="26"/>
        <end position="31"/>
    </location>
    <ligand>
        <name>ATP</name>
        <dbReference type="ChEBI" id="CHEBI:30616"/>
    </ligand>
</feature>
<feature type="binding site" evidence="1">
    <location>
        <position position="30"/>
    </location>
    <ligand>
        <name>Mg(2+)</name>
        <dbReference type="ChEBI" id="CHEBI:18420"/>
    </ligand>
</feature>
<feature type="binding site" evidence="1">
    <location>
        <position position="48"/>
    </location>
    <ligand>
        <name>substrate</name>
    </ligand>
</feature>
<feature type="binding site" evidence="1">
    <location>
        <position position="72"/>
    </location>
    <ligand>
        <name>substrate</name>
    </ligand>
</feature>
<feature type="binding site" evidence="1">
    <location>
        <position position="94"/>
    </location>
    <ligand>
        <name>substrate</name>
    </ligand>
</feature>
<feature type="binding site" evidence="1">
    <location>
        <position position="132"/>
    </location>
    <ligand>
        <name>ATP</name>
        <dbReference type="ChEBI" id="CHEBI:30616"/>
    </ligand>
</feature>
<feature type="binding site" evidence="1">
    <location>
        <position position="151"/>
    </location>
    <ligand>
        <name>substrate</name>
    </ligand>
</feature>
<sequence>MNESPAPHPLKQRLGGRNLYLVGMMASGKSSTGRPLAEQLSYGFVDTDAVIEQLAGQPIPKIFSEEGEAGFRTMESQVLNAIGQRHSLVVATGGGIVSKPENWGVLHQGIVIWLNPGREELLRRLNADSGNRPLLQTEDPEAAFDCLFAERLPLYCEADLHVEVGAEEPDGIALKIIEFLPQLLSPPPQMNG</sequence>
<dbReference type="EC" id="2.7.1.71" evidence="1"/>
<dbReference type="EMBL" id="BX548175">
    <property type="protein sequence ID" value="CAE20338.1"/>
    <property type="molecule type" value="Genomic_DNA"/>
</dbReference>
<dbReference type="RefSeq" id="WP_011129541.1">
    <property type="nucleotide sequence ID" value="NC_005071.1"/>
</dbReference>
<dbReference type="SMR" id="Q7V904"/>
<dbReference type="KEGG" id="pmt:PMT_0163"/>
<dbReference type="eggNOG" id="COG0703">
    <property type="taxonomic scope" value="Bacteria"/>
</dbReference>
<dbReference type="HOGENOM" id="CLU_057607_2_3_3"/>
<dbReference type="OrthoDB" id="9800332at2"/>
<dbReference type="UniPathway" id="UPA00053">
    <property type="reaction ID" value="UER00088"/>
</dbReference>
<dbReference type="Proteomes" id="UP000001423">
    <property type="component" value="Chromosome"/>
</dbReference>
<dbReference type="GO" id="GO:0005829">
    <property type="term" value="C:cytosol"/>
    <property type="evidence" value="ECO:0007669"/>
    <property type="project" value="TreeGrafter"/>
</dbReference>
<dbReference type="GO" id="GO:0005524">
    <property type="term" value="F:ATP binding"/>
    <property type="evidence" value="ECO:0007669"/>
    <property type="project" value="UniProtKB-UniRule"/>
</dbReference>
<dbReference type="GO" id="GO:0000287">
    <property type="term" value="F:magnesium ion binding"/>
    <property type="evidence" value="ECO:0007669"/>
    <property type="project" value="UniProtKB-UniRule"/>
</dbReference>
<dbReference type="GO" id="GO:0004765">
    <property type="term" value="F:shikimate kinase activity"/>
    <property type="evidence" value="ECO:0007669"/>
    <property type="project" value="UniProtKB-UniRule"/>
</dbReference>
<dbReference type="GO" id="GO:0008652">
    <property type="term" value="P:amino acid biosynthetic process"/>
    <property type="evidence" value="ECO:0007669"/>
    <property type="project" value="UniProtKB-KW"/>
</dbReference>
<dbReference type="GO" id="GO:0009073">
    <property type="term" value="P:aromatic amino acid family biosynthetic process"/>
    <property type="evidence" value="ECO:0007669"/>
    <property type="project" value="UniProtKB-KW"/>
</dbReference>
<dbReference type="GO" id="GO:0009423">
    <property type="term" value="P:chorismate biosynthetic process"/>
    <property type="evidence" value="ECO:0007669"/>
    <property type="project" value="UniProtKB-UniRule"/>
</dbReference>
<dbReference type="CDD" id="cd00464">
    <property type="entry name" value="SK"/>
    <property type="match status" value="1"/>
</dbReference>
<dbReference type="Gene3D" id="3.40.50.300">
    <property type="entry name" value="P-loop containing nucleotide triphosphate hydrolases"/>
    <property type="match status" value="1"/>
</dbReference>
<dbReference type="HAMAP" id="MF_00109">
    <property type="entry name" value="Shikimate_kinase"/>
    <property type="match status" value="1"/>
</dbReference>
<dbReference type="InterPro" id="IPR027417">
    <property type="entry name" value="P-loop_NTPase"/>
</dbReference>
<dbReference type="InterPro" id="IPR031322">
    <property type="entry name" value="Shikimate/glucono_kinase"/>
</dbReference>
<dbReference type="InterPro" id="IPR000623">
    <property type="entry name" value="Shikimate_kinase/TSH1"/>
</dbReference>
<dbReference type="InterPro" id="IPR023000">
    <property type="entry name" value="Shikimate_kinase_CS"/>
</dbReference>
<dbReference type="PANTHER" id="PTHR21087">
    <property type="entry name" value="SHIKIMATE KINASE"/>
    <property type="match status" value="1"/>
</dbReference>
<dbReference type="PANTHER" id="PTHR21087:SF16">
    <property type="entry name" value="SHIKIMATE KINASE 1, CHLOROPLASTIC"/>
    <property type="match status" value="1"/>
</dbReference>
<dbReference type="Pfam" id="PF01202">
    <property type="entry name" value="SKI"/>
    <property type="match status" value="1"/>
</dbReference>
<dbReference type="PRINTS" id="PR01100">
    <property type="entry name" value="SHIKIMTKNASE"/>
</dbReference>
<dbReference type="SUPFAM" id="SSF52540">
    <property type="entry name" value="P-loop containing nucleoside triphosphate hydrolases"/>
    <property type="match status" value="1"/>
</dbReference>
<dbReference type="PROSITE" id="PS01128">
    <property type="entry name" value="SHIKIMATE_KINASE"/>
    <property type="match status" value="1"/>
</dbReference>
<protein>
    <recommendedName>
        <fullName evidence="1">Shikimate kinase</fullName>
        <shortName evidence="1">SK</shortName>
        <ecNumber evidence="1">2.7.1.71</ecNumber>
    </recommendedName>
</protein>
<comment type="function">
    <text evidence="1">Catalyzes the specific phosphorylation of the 3-hydroxyl group of shikimic acid using ATP as a cosubstrate.</text>
</comment>
<comment type="catalytic activity">
    <reaction evidence="1">
        <text>shikimate + ATP = 3-phosphoshikimate + ADP + H(+)</text>
        <dbReference type="Rhea" id="RHEA:13121"/>
        <dbReference type="ChEBI" id="CHEBI:15378"/>
        <dbReference type="ChEBI" id="CHEBI:30616"/>
        <dbReference type="ChEBI" id="CHEBI:36208"/>
        <dbReference type="ChEBI" id="CHEBI:145989"/>
        <dbReference type="ChEBI" id="CHEBI:456216"/>
        <dbReference type="EC" id="2.7.1.71"/>
    </reaction>
</comment>
<comment type="cofactor">
    <cofactor evidence="1">
        <name>Mg(2+)</name>
        <dbReference type="ChEBI" id="CHEBI:18420"/>
    </cofactor>
    <text evidence="1">Binds 1 Mg(2+) ion per subunit.</text>
</comment>
<comment type="pathway">
    <text evidence="1">Metabolic intermediate biosynthesis; chorismate biosynthesis; chorismate from D-erythrose 4-phosphate and phosphoenolpyruvate: step 5/7.</text>
</comment>
<comment type="subunit">
    <text evidence="1">Monomer.</text>
</comment>
<comment type="subcellular location">
    <subcellularLocation>
        <location evidence="1">Cytoplasm</location>
    </subcellularLocation>
</comment>
<comment type="similarity">
    <text evidence="1">Belongs to the shikimate kinase family.</text>
</comment>
<name>AROK_PROMM</name>
<evidence type="ECO:0000255" key="1">
    <source>
        <dbReference type="HAMAP-Rule" id="MF_00109"/>
    </source>
</evidence>
<gene>
    <name evidence="1" type="primary">aroK</name>
    <name type="ordered locus">PMT_0163</name>
</gene>
<proteinExistence type="inferred from homology"/>
<keyword id="KW-0028">Amino-acid biosynthesis</keyword>
<keyword id="KW-0057">Aromatic amino acid biosynthesis</keyword>
<keyword id="KW-0067">ATP-binding</keyword>
<keyword id="KW-0963">Cytoplasm</keyword>
<keyword id="KW-0418">Kinase</keyword>
<keyword id="KW-0460">Magnesium</keyword>
<keyword id="KW-0479">Metal-binding</keyword>
<keyword id="KW-0547">Nucleotide-binding</keyword>
<keyword id="KW-1185">Reference proteome</keyword>
<keyword id="KW-0808">Transferase</keyword>
<organism>
    <name type="scientific">Prochlorococcus marinus (strain MIT 9313)</name>
    <dbReference type="NCBI Taxonomy" id="74547"/>
    <lineage>
        <taxon>Bacteria</taxon>
        <taxon>Bacillati</taxon>
        <taxon>Cyanobacteriota</taxon>
        <taxon>Cyanophyceae</taxon>
        <taxon>Synechococcales</taxon>
        <taxon>Prochlorococcaceae</taxon>
        <taxon>Prochlorococcus</taxon>
    </lineage>
</organism>
<accession>Q7V904</accession>
<reference key="1">
    <citation type="journal article" date="2003" name="Nature">
        <title>Genome divergence in two Prochlorococcus ecotypes reflects oceanic niche differentiation.</title>
        <authorList>
            <person name="Rocap G."/>
            <person name="Larimer F.W."/>
            <person name="Lamerdin J.E."/>
            <person name="Malfatti S."/>
            <person name="Chain P."/>
            <person name="Ahlgren N.A."/>
            <person name="Arellano A."/>
            <person name="Coleman M."/>
            <person name="Hauser L."/>
            <person name="Hess W.R."/>
            <person name="Johnson Z.I."/>
            <person name="Land M.L."/>
            <person name="Lindell D."/>
            <person name="Post A.F."/>
            <person name="Regala W."/>
            <person name="Shah M."/>
            <person name="Shaw S.L."/>
            <person name="Steglich C."/>
            <person name="Sullivan M.B."/>
            <person name="Ting C.S."/>
            <person name="Tolonen A."/>
            <person name="Webb E.A."/>
            <person name="Zinser E.R."/>
            <person name="Chisholm S.W."/>
        </authorList>
    </citation>
    <scope>NUCLEOTIDE SEQUENCE [LARGE SCALE GENOMIC DNA]</scope>
    <source>
        <strain>MIT 9313</strain>
    </source>
</reference>